<organism>
    <name type="scientific">Streptococcus sanguinis (strain SK36)</name>
    <dbReference type="NCBI Taxonomy" id="388919"/>
    <lineage>
        <taxon>Bacteria</taxon>
        <taxon>Bacillati</taxon>
        <taxon>Bacillota</taxon>
        <taxon>Bacilli</taxon>
        <taxon>Lactobacillales</taxon>
        <taxon>Streptococcaceae</taxon>
        <taxon>Streptococcus</taxon>
    </lineage>
</organism>
<gene>
    <name type="ordered locus">SSA_1218</name>
</gene>
<feature type="chain" id="PRO_1000089867" description="UPF0758 protein SSA_1218">
    <location>
        <begin position="1"/>
        <end position="227"/>
    </location>
</feature>
<feature type="domain" description="MPN" evidence="1">
    <location>
        <begin position="104"/>
        <end position="226"/>
    </location>
</feature>
<feature type="short sequence motif" description="JAMM motif" evidence="1">
    <location>
        <begin position="175"/>
        <end position="188"/>
    </location>
</feature>
<feature type="binding site" evidence="1">
    <location>
        <position position="175"/>
    </location>
    <ligand>
        <name>Zn(2+)</name>
        <dbReference type="ChEBI" id="CHEBI:29105"/>
        <note>catalytic</note>
    </ligand>
</feature>
<feature type="binding site" evidence="1">
    <location>
        <position position="177"/>
    </location>
    <ligand>
        <name>Zn(2+)</name>
        <dbReference type="ChEBI" id="CHEBI:29105"/>
        <note>catalytic</note>
    </ligand>
</feature>
<feature type="binding site" evidence="1">
    <location>
        <position position="188"/>
    </location>
    <ligand>
        <name>Zn(2+)</name>
        <dbReference type="ChEBI" id="CHEBI:29105"/>
        <note>catalytic</note>
    </ligand>
</feature>
<protein>
    <recommendedName>
        <fullName>UPF0758 protein SSA_1218</fullName>
    </recommendedName>
</protein>
<proteinExistence type="inferred from homology"/>
<reference key="1">
    <citation type="journal article" date="2007" name="J. Bacteriol.">
        <title>Genome of the opportunistic pathogen Streptococcus sanguinis.</title>
        <authorList>
            <person name="Xu P."/>
            <person name="Alves J.M."/>
            <person name="Kitten T."/>
            <person name="Brown A."/>
            <person name="Chen Z."/>
            <person name="Ozaki L.S."/>
            <person name="Manque P."/>
            <person name="Ge X."/>
            <person name="Serrano M.G."/>
            <person name="Puiu D."/>
            <person name="Hendricks S."/>
            <person name="Wang Y."/>
            <person name="Chaplin M.D."/>
            <person name="Akan D."/>
            <person name="Paik S."/>
            <person name="Peterson D.L."/>
            <person name="Macrina F.L."/>
            <person name="Buck G.A."/>
        </authorList>
    </citation>
    <scope>NUCLEOTIDE SEQUENCE [LARGE SCALE GENOMIC DNA]</scope>
    <source>
        <strain>SK36</strain>
    </source>
</reference>
<comment type="similarity">
    <text evidence="2">Belongs to the UPF0758 family.</text>
</comment>
<sequence length="227" mass="26007">MYSISFQDDISMMPRERLMREGAEKLSNQELLSIFLRTGNKKETVFQVSQRILSSISSLNDLKYLTLQELQTISGIGPIKAVELQAIIELGRRINRAEVLQKEQIMGSQKLARKMQQELGDMRQECLVAIYLNSQNQILHQQTIFMGTVSRSIAEPREILHYALKHLATSIILVHNHPSGSVVPSRNDDEVTQHMKEACEMMGLVLLDHLIVSKSNYYSYREETDMI</sequence>
<name>Y1218_STRSV</name>
<keyword id="KW-0378">Hydrolase</keyword>
<keyword id="KW-0479">Metal-binding</keyword>
<keyword id="KW-0482">Metalloprotease</keyword>
<keyword id="KW-0645">Protease</keyword>
<keyword id="KW-1185">Reference proteome</keyword>
<keyword id="KW-0862">Zinc</keyword>
<accession>A3CN67</accession>
<evidence type="ECO:0000255" key="1">
    <source>
        <dbReference type="PROSITE-ProRule" id="PRU01182"/>
    </source>
</evidence>
<evidence type="ECO:0000305" key="2"/>
<dbReference type="EMBL" id="CP000387">
    <property type="protein sequence ID" value="ABN44622.1"/>
    <property type="molecule type" value="Genomic_DNA"/>
</dbReference>
<dbReference type="RefSeq" id="WP_009660453.1">
    <property type="nucleotide sequence ID" value="NC_009009.1"/>
</dbReference>
<dbReference type="RefSeq" id="YP_001035172.1">
    <property type="nucleotide sequence ID" value="NC_009009.1"/>
</dbReference>
<dbReference type="SMR" id="A3CN67"/>
<dbReference type="STRING" id="388919.SSA_1218"/>
<dbReference type="KEGG" id="ssa:SSA_1218"/>
<dbReference type="PATRIC" id="fig|388919.9.peg.1159"/>
<dbReference type="eggNOG" id="COG2003">
    <property type="taxonomic scope" value="Bacteria"/>
</dbReference>
<dbReference type="HOGENOM" id="CLU_073529_0_2_9"/>
<dbReference type="OrthoDB" id="9804482at2"/>
<dbReference type="Proteomes" id="UP000002148">
    <property type="component" value="Chromosome"/>
</dbReference>
<dbReference type="GO" id="GO:0046872">
    <property type="term" value="F:metal ion binding"/>
    <property type="evidence" value="ECO:0007669"/>
    <property type="project" value="UniProtKB-KW"/>
</dbReference>
<dbReference type="GO" id="GO:0008237">
    <property type="term" value="F:metallopeptidase activity"/>
    <property type="evidence" value="ECO:0007669"/>
    <property type="project" value="UniProtKB-KW"/>
</dbReference>
<dbReference type="GO" id="GO:0006508">
    <property type="term" value="P:proteolysis"/>
    <property type="evidence" value="ECO:0007669"/>
    <property type="project" value="UniProtKB-KW"/>
</dbReference>
<dbReference type="CDD" id="cd08071">
    <property type="entry name" value="MPN_DUF2466"/>
    <property type="match status" value="1"/>
</dbReference>
<dbReference type="Gene3D" id="3.40.140.10">
    <property type="entry name" value="Cytidine Deaminase, domain 2"/>
    <property type="match status" value="1"/>
</dbReference>
<dbReference type="InterPro" id="IPR037518">
    <property type="entry name" value="MPN"/>
</dbReference>
<dbReference type="InterPro" id="IPR025657">
    <property type="entry name" value="RadC_JAB"/>
</dbReference>
<dbReference type="InterPro" id="IPR010994">
    <property type="entry name" value="RuvA_2-like"/>
</dbReference>
<dbReference type="InterPro" id="IPR001405">
    <property type="entry name" value="UPF0758"/>
</dbReference>
<dbReference type="InterPro" id="IPR020891">
    <property type="entry name" value="UPF0758_CS"/>
</dbReference>
<dbReference type="InterPro" id="IPR046778">
    <property type="entry name" value="UPF0758_N"/>
</dbReference>
<dbReference type="NCBIfam" id="NF000642">
    <property type="entry name" value="PRK00024.1"/>
    <property type="match status" value="1"/>
</dbReference>
<dbReference type="NCBIfam" id="TIGR00608">
    <property type="entry name" value="radc"/>
    <property type="match status" value="1"/>
</dbReference>
<dbReference type="PANTHER" id="PTHR30471">
    <property type="entry name" value="DNA REPAIR PROTEIN RADC"/>
    <property type="match status" value="1"/>
</dbReference>
<dbReference type="PANTHER" id="PTHR30471:SF3">
    <property type="entry name" value="UPF0758 PROTEIN YEES-RELATED"/>
    <property type="match status" value="1"/>
</dbReference>
<dbReference type="Pfam" id="PF04002">
    <property type="entry name" value="RadC"/>
    <property type="match status" value="1"/>
</dbReference>
<dbReference type="Pfam" id="PF20582">
    <property type="entry name" value="UPF0758_N"/>
    <property type="match status" value="1"/>
</dbReference>
<dbReference type="SUPFAM" id="SSF47781">
    <property type="entry name" value="RuvA domain 2-like"/>
    <property type="match status" value="1"/>
</dbReference>
<dbReference type="PROSITE" id="PS50249">
    <property type="entry name" value="MPN"/>
    <property type="match status" value="1"/>
</dbReference>
<dbReference type="PROSITE" id="PS01302">
    <property type="entry name" value="UPF0758"/>
    <property type="match status" value="1"/>
</dbReference>